<dbReference type="EC" id="6.3.3.1" evidence="1"/>
<dbReference type="EMBL" id="CP000388">
    <property type="protein sequence ID" value="ABG41005.1"/>
    <property type="molecule type" value="Genomic_DNA"/>
</dbReference>
<dbReference type="RefSeq" id="WP_011575276.1">
    <property type="nucleotide sequence ID" value="NC_008228.1"/>
</dbReference>
<dbReference type="SMR" id="Q15SY3"/>
<dbReference type="STRING" id="342610.Patl_2489"/>
<dbReference type="KEGG" id="pat:Patl_2489"/>
<dbReference type="eggNOG" id="COG0150">
    <property type="taxonomic scope" value="Bacteria"/>
</dbReference>
<dbReference type="HOGENOM" id="CLU_047116_0_0_6"/>
<dbReference type="OrthoDB" id="9777881at2"/>
<dbReference type="UniPathway" id="UPA00074">
    <property type="reaction ID" value="UER00129"/>
</dbReference>
<dbReference type="Proteomes" id="UP000001981">
    <property type="component" value="Chromosome"/>
</dbReference>
<dbReference type="GO" id="GO:0005829">
    <property type="term" value="C:cytosol"/>
    <property type="evidence" value="ECO:0007669"/>
    <property type="project" value="TreeGrafter"/>
</dbReference>
<dbReference type="GO" id="GO:0005524">
    <property type="term" value="F:ATP binding"/>
    <property type="evidence" value="ECO:0007669"/>
    <property type="project" value="UniProtKB-KW"/>
</dbReference>
<dbReference type="GO" id="GO:0004637">
    <property type="term" value="F:phosphoribosylamine-glycine ligase activity"/>
    <property type="evidence" value="ECO:0007669"/>
    <property type="project" value="TreeGrafter"/>
</dbReference>
<dbReference type="GO" id="GO:0004641">
    <property type="term" value="F:phosphoribosylformylglycinamidine cyclo-ligase activity"/>
    <property type="evidence" value="ECO:0007669"/>
    <property type="project" value="UniProtKB-UniRule"/>
</dbReference>
<dbReference type="GO" id="GO:0006189">
    <property type="term" value="P:'de novo' IMP biosynthetic process"/>
    <property type="evidence" value="ECO:0007669"/>
    <property type="project" value="UniProtKB-UniRule"/>
</dbReference>
<dbReference type="GO" id="GO:0046084">
    <property type="term" value="P:adenine biosynthetic process"/>
    <property type="evidence" value="ECO:0007669"/>
    <property type="project" value="TreeGrafter"/>
</dbReference>
<dbReference type="CDD" id="cd02196">
    <property type="entry name" value="PurM"/>
    <property type="match status" value="1"/>
</dbReference>
<dbReference type="FunFam" id="3.30.1330.10:FF:000001">
    <property type="entry name" value="Phosphoribosylformylglycinamidine cyclo-ligase"/>
    <property type="match status" value="1"/>
</dbReference>
<dbReference type="FunFam" id="3.90.650.10:FF:000001">
    <property type="entry name" value="Phosphoribosylformylglycinamidine cyclo-ligase"/>
    <property type="match status" value="1"/>
</dbReference>
<dbReference type="Gene3D" id="3.90.650.10">
    <property type="entry name" value="PurM-like C-terminal domain"/>
    <property type="match status" value="1"/>
</dbReference>
<dbReference type="Gene3D" id="3.30.1330.10">
    <property type="entry name" value="PurM-like, N-terminal domain"/>
    <property type="match status" value="1"/>
</dbReference>
<dbReference type="HAMAP" id="MF_00741">
    <property type="entry name" value="AIRS"/>
    <property type="match status" value="1"/>
</dbReference>
<dbReference type="InterPro" id="IPR010918">
    <property type="entry name" value="PurM-like_C_dom"/>
</dbReference>
<dbReference type="InterPro" id="IPR036676">
    <property type="entry name" value="PurM-like_C_sf"/>
</dbReference>
<dbReference type="InterPro" id="IPR016188">
    <property type="entry name" value="PurM-like_N"/>
</dbReference>
<dbReference type="InterPro" id="IPR036921">
    <property type="entry name" value="PurM-like_N_sf"/>
</dbReference>
<dbReference type="InterPro" id="IPR004733">
    <property type="entry name" value="PurM_cligase"/>
</dbReference>
<dbReference type="NCBIfam" id="TIGR00878">
    <property type="entry name" value="purM"/>
    <property type="match status" value="1"/>
</dbReference>
<dbReference type="PANTHER" id="PTHR10520:SF12">
    <property type="entry name" value="TRIFUNCTIONAL PURINE BIOSYNTHETIC PROTEIN ADENOSINE-3"/>
    <property type="match status" value="1"/>
</dbReference>
<dbReference type="PANTHER" id="PTHR10520">
    <property type="entry name" value="TRIFUNCTIONAL PURINE BIOSYNTHETIC PROTEIN ADENOSINE-3-RELATED"/>
    <property type="match status" value="1"/>
</dbReference>
<dbReference type="Pfam" id="PF00586">
    <property type="entry name" value="AIRS"/>
    <property type="match status" value="1"/>
</dbReference>
<dbReference type="Pfam" id="PF02769">
    <property type="entry name" value="AIRS_C"/>
    <property type="match status" value="1"/>
</dbReference>
<dbReference type="SUPFAM" id="SSF56042">
    <property type="entry name" value="PurM C-terminal domain-like"/>
    <property type="match status" value="1"/>
</dbReference>
<dbReference type="SUPFAM" id="SSF55326">
    <property type="entry name" value="PurM N-terminal domain-like"/>
    <property type="match status" value="1"/>
</dbReference>
<feature type="chain" id="PRO_1000046457" description="Phosphoribosylformylglycinamidine cyclo-ligase">
    <location>
        <begin position="1"/>
        <end position="345"/>
    </location>
</feature>
<keyword id="KW-0067">ATP-binding</keyword>
<keyword id="KW-0963">Cytoplasm</keyword>
<keyword id="KW-0436">Ligase</keyword>
<keyword id="KW-0547">Nucleotide-binding</keyword>
<keyword id="KW-0658">Purine biosynthesis</keyword>
<reference key="1">
    <citation type="submission" date="2006-06" db="EMBL/GenBank/DDBJ databases">
        <title>Complete sequence of Pseudoalteromonas atlantica T6c.</title>
        <authorList>
            <consortium name="US DOE Joint Genome Institute"/>
            <person name="Copeland A."/>
            <person name="Lucas S."/>
            <person name="Lapidus A."/>
            <person name="Barry K."/>
            <person name="Detter J.C."/>
            <person name="Glavina del Rio T."/>
            <person name="Hammon N."/>
            <person name="Israni S."/>
            <person name="Dalin E."/>
            <person name="Tice H."/>
            <person name="Pitluck S."/>
            <person name="Saunders E."/>
            <person name="Brettin T."/>
            <person name="Bruce D."/>
            <person name="Han C."/>
            <person name="Tapia R."/>
            <person name="Gilna P."/>
            <person name="Schmutz J."/>
            <person name="Larimer F."/>
            <person name="Land M."/>
            <person name="Hauser L."/>
            <person name="Kyrpides N."/>
            <person name="Kim E."/>
            <person name="Karls A.C."/>
            <person name="Bartlett D."/>
            <person name="Higgins B.P."/>
            <person name="Richardson P."/>
        </authorList>
    </citation>
    <scope>NUCLEOTIDE SEQUENCE [LARGE SCALE GENOMIC DNA]</scope>
    <source>
        <strain>T6c / ATCC BAA-1087</strain>
    </source>
</reference>
<accession>Q15SY3</accession>
<comment type="catalytic activity">
    <reaction evidence="1">
        <text>2-formamido-N(1)-(5-O-phospho-beta-D-ribosyl)acetamidine + ATP = 5-amino-1-(5-phospho-beta-D-ribosyl)imidazole + ADP + phosphate + H(+)</text>
        <dbReference type="Rhea" id="RHEA:23032"/>
        <dbReference type="ChEBI" id="CHEBI:15378"/>
        <dbReference type="ChEBI" id="CHEBI:30616"/>
        <dbReference type="ChEBI" id="CHEBI:43474"/>
        <dbReference type="ChEBI" id="CHEBI:137981"/>
        <dbReference type="ChEBI" id="CHEBI:147287"/>
        <dbReference type="ChEBI" id="CHEBI:456216"/>
        <dbReference type="EC" id="6.3.3.1"/>
    </reaction>
</comment>
<comment type="pathway">
    <text evidence="1">Purine metabolism; IMP biosynthesis via de novo pathway; 5-amino-1-(5-phospho-D-ribosyl)imidazole from N(2)-formyl-N(1)-(5-phospho-D-ribosyl)glycinamide: step 2/2.</text>
</comment>
<comment type="subcellular location">
    <subcellularLocation>
        <location evidence="1">Cytoplasm</location>
    </subcellularLocation>
</comment>
<comment type="similarity">
    <text evidence="1">Belongs to the AIR synthase family.</text>
</comment>
<proteinExistence type="inferred from homology"/>
<protein>
    <recommendedName>
        <fullName evidence="1">Phosphoribosylformylglycinamidine cyclo-ligase</fullName>
        <ecNumber evidence="1">6.3.3.1</ecNumber>
    </recommendedName>
    <alternativeName>
        <fullName evidence="1">AIR synthase</fullName>
    </alternativeName>
    <alternativeName>
        <fullName evidence="1">AIRS</fullName>
    </alternativeName>
    <alternativeName>
        <fullName evidence="1">Phosphoribosyl-aminoimidazole synthetase</fullName>
    </alternativeName>
</protein>
<name>PUR5_PSEA6</name>
<gene>
    <name evidence="1" type="primary">purM</name>
    <name type="ordered locus">Patl_2489</name>
</gene>
<organism>
    <name type="scientific">Pseudoalteromonas atlantica (strain T6c / ATCC BAA-1087)</name>
    <dbReference type="NCBI Taxonomy" id="3042615"/>
    <lineage>
        <taxon>Bacteria</taxon>
        <taxon>Pseudomonadati</taxon>
        <taxon>Pseudomonadota</taxon>
        <taxon>Gammaproteobacteria</taxon>
        <taxon>Alteromonadales</taxon>
        <taxon>Alteromonadaceae</taxon>
        <taxon>Paraglaciecola</taxon>
    </lineage>
</organism>
<sequence length="345" mass="36992">MTDNKPSLSYKDAGVDIDAGNELVERIKSVSKKTHRPEVRGGLGGFGALCSLPTKYKEPLLVSGTDGVGTKLRLAMDLEQHDGIGIDLVAMCVNDLIVQGAEPLFFLDYYATGKLDVDTAAKVVTGIGKGCELSGCALIGGETAEMPGMYHGNDYDVAGFCVGVVEAADVIDGSRVKAGNVLIALGSSGPHSNGYSLVRKILEVSGCEASEVFDGKPLSEHLLEPTRIYVKSVLHLLESVQVNAITHITGGGFWENIPRVLPQGTKAVIDESSWQWPSIFNWLQENGNVTTHEMYRTFNCGVGLMIALEADKADEAIAILKSQGENVWQIGHIEDSSDNNQVEIK</sequence>
<evidence type="ECO:0000255" key="1">
    <source>
        <dbReference type="HAMAP-Rule" id="MF_00741"/>
    </source>
</evidence>